<sequence>MANDFLFTSESVSEGHPDKVADQISDAILDAIFEQDPRSRVAAETLTNTGLVVLAGEITTNAHVDYIQVARDTIKRIGYDNTDYGIDYKGCAVMVCYDKQSNDIAQGVDHASDDHLNTGAGDQGLMFGYACDETPELMPAPIYYAHRLVERQAQLRKDGRLPFLRPDAKSQVTMRYVDGKPHSIDTVVLSTQHHPDQSETPTKMKASFNEAIIEEIIKPVLPKEWLKDTRYLINPTGRFVIGGPQGDCGLTGRKIIVDTYGGACPHGGGAFSGKDPSKVDRSAAYAARYVAKNIVAAGLARQCQIQVAYAIGVAQPMNITVYTEGTGVIPDAKIAELVREFFDLRPKGIIQMLDLLRPIYQKTAAYGHFGREEPEFTWEATTQAAALRAAAGL</sequence>
<feature type="chain" id="PRO_1000202629" description="S-adenosylmethionine synthase">
    <location>
        <begin position="1"/>
        <end position="393"/>
    </location>
</feature>
<feature type="region of interest" description="Flexible loop" evidence="1">
    <location>
        <begin position="100"/>
        <end position="110"/>
    </location>
</feature>
<feature type="binding site" description="in other chain" evidence="1">
    <location>
        <position position="16"/>
    </location>
    <ligand>
        <name>ATP</name>
        <dbReference type="ChEBI" id="CHEBI:30616"/>
        <note>ligand shared between two neighboring subunits</note>
    </ligand>
</feature>
<feature type="binding site" evidence="1">
    <location>
        <position position="18"/>
    </location>
    <ligand>
        <name>Mg(2+)</name>
        <dbReference type="ChEBI" id="CHEBI:18420"/>
    </ligand>
</feature>
<feature type="binding site" evidence="1">
    <location>
        <position position="44"/>
    </location>
    <ligand>
        <name>K(+)</name>
        <dbReference type="ChEBI" id="CHEBI:29103"/>
    </ligand>
</feature>
<feature type="binding site" description="in other chain" evidence="1">
    <location>
        <position position="57"/>
    </location>
    <ligand>
        <name>L-methionine</name>
        <dbReference type="ChEBI" id="CHEBI:57844"/>
        <note>ligand shared between two neighboring subunits</note>
    </ligand>
</feature>
<feature type="binding site" description="in other chain" evidence="1">
    <location>
        <position position="100"/>
    </location>
    <ligand>
        <name>L-methionine</name>
        <dbReference type="ChEBI" id="CHEBI:57844"/>
        <note>ligand shared between two neighboring subunits</note>
    </ligand>
</feature>
<feature type="binding site" description="in other chain" evidence="1">
    <location>
        <begin position="167"/>
        <end position="169"/>
    </location>
    <ligand>
        <name>ATP</name>
        <dbReference type="ChEBI" id="CHEBI:30616"/>
        <note>ligand shared between two neighboring subunits</note>
    </ligand>
</feature>
<feature type="binding site" description="in other chain" evidence="1">
    <location>
        <begin position="238"/>
        <end position="239"/>
    </location>
    <ligand>
        <name>ATP</name>
        <dbReference type="ChEBI" id="CHEBI:30616"/>
        <note>ligand shared between two neighboring subunits</note>
    </ligand>
</feature>
<feature type="binding site" evidence="1">
    <location>
        <position position="247"/>
    </location>
    <ligand>
        <name>ATP</name>
        <dbReference type="ChEBI" id="CHEBI:30616"/>
        <note>ligand shared between two neighboring subunits</note>
    </ligand>
</feature>
<feature type="binding site" evidence="1">
    <location>
        <position position="247"/>
    </location>
    <ligand>
        <name>L-methionine</name>
        <dbReference type="ChEBI" id="CHEBI:57844"/>
        <note>ligand shared between two neighboring subunits</note>
    </ligand>
</feature>
<feature type="binding site" description="in other chain" evidence="1">
    <location>
        <begin position="253"/>
        <end position="254"/>
    </location>
    <ligand>
        <name>ATP</name>
        <dbReference type="ChEBI" id="CHEBI:30616"/>
        <note>ligand shared between two neighboring subunits</note>
    </ligand>
</feature>
<feature type="binding site" evidence="1">
    <location>
        <position position="270"/>
    </location>
    <ligand>
        <name>ATP</name>
        <dbReference type="ChEBI" id="CHEBI:30616"/>
        <note>ligand shared between two neighboring subunits</note>
    </ligand>
</feature>
<feature type="binding site" evidence="1">
    <location>
        <position position="274"/>
    </location>
    <ligand>
        <name>ATP</name>
        <dbReference type="ChEBI" id="CHEBI:30616"/>
        <note>ligand shared between two neighboring subunits</note>
    </ligand>
</feature>
<feature type="binding site" description="in other chain" evidence="1">
    <location>
        <position position="278"/>
    </location>
    <ligand>
        <name>L-methionine</name>
        <dbReference type="ChEBI" id="CHEBI:57844"/>
        <note>ligand shared between two neighboring subunits</note>
    </ligand>
</feature>
<keyword id="KW-0067">ATP-binding</keyword>
<keyword id="KW-0963">Cytoplasm</keyword>
<keyword id="KW-0460">Magnesium</keyword>
<keyword id="KW-0479">Metal-binding</keyword>
<keyword id="KW-0547">Nucleotide-binding</keyword>
<keyword id="KW-0554">One-carbon metabolism</keyword>
<keyword id="KW-0630">Potassium</keyword>
<keyword id="KW-0808">Transferase</keyword>
<dbReference type="EC" id="2.5.1.6" evidence="1"/>
<dbReference type="EMBL" id="CP001635">
    <property type="protein sequence ID" value="ACS17777.1"/>
    <property type="molecule type" value="Genomic_DNA"/>
</dbReference>
<dbReference type="SMR" id="C5CQF1"/>
<dbReference type="STRING" id="543728.Vapar_1126"/>
<dbReference type="KEGG" id="vap:Vapar_1126"/>
<dbReference type="eggNOG" id="COG0192">
    <property type="taxonomic scope" value="Bacteria"/>
</dbReference>
<dbReference type="HOGENOM" id="CLU_041802_1_1_4"/>
<dbReference type="OrthoDB" id="9801686at2"/>
<dbReference type="UniPathway" id="UPA00315">
    <property type="reaction ID" value="UER00080"/>
</dbReference>
<dbReference type="GO" id="GO:0005737">
    <property type="term" value="C:cytoplasm"/>
    <property type="evidence" value="ECO:0007669"/>
    <property type="project" value="UniProtKB-SubCell"/>
</dbReference>
<dbReference type="GO" id="GO:0005524">
    <property type="term" value="F:ATP binding"/>
    <property type="evidence" value="ECO:0007669"/>
    <property type="project" value="UniProtKB-UniRule"/>
</dbReference>
<dbReference type="GO" id="GO:0000287">
    <property type="term" value="F:magnesium ion binding"/>
    <property type="evidence" value="ECO:0007669"/>
    <property type="project" value="UniProtKB-UniRule"/>
</dbReference>
<dbReference type="GO" id="GO:0004478">
    <property type="term" value="F:methionine adenosyltransferase activity"/>
    <property type="evidence" value="ECO:0007669"/>
    <property type="project" value="UniProtKB-UniRule"/>
</dbReference>
<dbReference type="GO" id="GO:0006730">
    <property type="term" value="P:one-carbon metabolic process"/>
    <property type="evidence" value="ECO:0007669"/>
    <property type="project" value="UniProtKB-KW"/>
</dbReference>
<dbReference type="GO" id="GO:0006556">
    <property type="term" value="P:S-adenosylmethionine biosynthetic process"/>
    <property type="evidence" value="ECO:0007669"/>
    <property type="project" value="UniProtKB-UniRule"/>
</dbReference>
<dbReference type="CDD" id="cd18079">
    <property type="entry name" value="S-AdoMet_synt"/>
    <property type="match status" value="1"/>
</dbReference>
<dbReference type="FunFam" id="3.30.300.10:FF:000003">
    <property type="entry name" value="S-adenosylmethionine synthase"/>
    <property type="match status" value="1"/>
</dbReference>
<dbReference type="FunFam" id="3.30.300.10:FF:000004">
    <property type="entry name" value="S-adenosylmethionine synthase"/>
    <property type="match status" value="1"/>
</dbReference>
<dbReference type="Gene3D" id="3.30.300.10">
    <property type="match status" value="3"/>
</dbReference>
<dbReference type="HAMAP" id="MF_00086">
    <property type="entry name" value="S_AdoMet_synth1"/>
    <property type="match status" value="1"/>
</dbReference>
<dbReference type="InterPro" id="IPR022631">
    <property type="entry name" value="ADOMET_SYNTHASE_CS"/>
</dbReference>
<dbReference type="InterPro" id="IPR022630">
    <property type="entry name" value="S-AdoMet_synt_C"/>
</dbReference>
<dbReference type="InterPro" id="IPR022629">
    <property type="entry name" value="S-AdoMet_synt_central"/>
</dbReference>
<dbReference type="InterPro" id="IPR022628">
    <property type="entry name" value="S-AdoMet_synt_N"/>
</dbReference>
<dbReference type="InterPro" id="IPR002133">
    <property type="entry name" value="S-AdoMet_synthetase"/>
</dbReference>
<dbReference type="InterPro" id="IPR022636">
    <property type="entry name" value="S-AdoMet_synthetase_sfam"/>
</dbReference>
<dbReference type="NCBIfam" id="TIGR01034">
    <property type="entry name" value="metK"/>
    <property type="match status" value="1"/>
</dbReference>
<dbReference type="PANTHER" id="PTHR11964">
    <property type="entry name" value="S-ADENOSYLMETHIONINE SYNTHETASE"/>
    <property type="match status" value="1"/>
</dbReference>
<dbReference type="Pfam" id="PF02773">
    <property type="entry name" value="S-AdoMet_synt_C"/>
    <property type="match status" value="1"/>
</dbReference>
<dbReference type="Pfam" id="PF02772">
    <property type="entry name" value="S-AdoMet_synt_M"/>
    <property type="match status" value="1"/>
</dbReference>
<dbReference type="Pfam" id="PF00438">
    <property type="entry name" value="S-AdoMet_synt_N"/>
    <property type="match status" value="1"/>
</dbReference>
<dbReference type="PIRSF" id="PIRSF000497">
    <property type="entry name" value="MAT"/>
    <property type="match status" value="1"/>
</dbReference>
<dbReference type="SUPFAM" id="SSF55973">
    <property type="entry name" value="S-adenosylmethionine synthetase"/>
    <property type="match status" value="3"/>
</dbReference>
<dbReference type="PROSITE" id="PS00376">
    <property type="entry name" value="ADOMET_SYNTHASE_1"/>
    <property type="match status" value="1"/>
</dbReference>
<dbReference type="PROSITE" id="PS00377">
    <property type="entry name" value="ADOMET_SYNTHASE_2"/>
    <property type="match status" value="1"/>
</dbReference>
<reference key="1">
    <citation type="journal article" date="2011" name="J. Bacteriol.">
        <title>Complete genome sequence of the metabolically versatile plant growth-promoting endophyte, Variovorax paradoxus S110.</title>
        <authorList>
            <person name="Han J.I."/>
            <person name="Choi H.K."/>
            <person name="Lee S.W."/>
            <person name="Orwin P.M."/>
            <person name="Kim J."/>
            <person name="Laroe S.L."/>
            <person name="Kim T.G."/>
            <person name="O'Neil J."/>
            <person name="Leadbetter J.R."/>
            <person name="Lee S.Y."/>
            <person name="Hur C.G."/>
            <person name="Spain J.C."/>
            <person name="Ovchinnikova G."/>
            <person name="Goodwin L."/>
            <person name="Han C."/>
        </authorList>
    </citation>
    <scope>NUCLEOTIDE SEQUENCE [LARGE SCALE GENOMIC DNA]</scope>
    <source>
        <strain>S110</strain>
    </source>
</reference>
<protein>
    <recommendedName>
        <fullName evidence="1">S-adenosylmethionine synthase</fullName>
        <shortName evidence="1">AdoMet synthase</shortName>
        <ecNumber evidence="1">2.5.1.6</ecNumber>
    </recommendedName>
    <alternativeName>
        <fullName evidence="1">MAT</fullName>
    </alternativeName>
    <alternativeName>
        <fullName evidence="1">Methionine adenosyltransferase</fullName>
    </alternativeName>
</protein>
<evidence type="ECO:0000255" key="1">
    <source>
        <dbReference type="HAMAP-Rule" id="MF_00086"/>
    </source>
</evidence>
<proteinExistence type="inferred from homology"/>
<accession>C5CQF1</accession>
<gene>
    <name evidence="1" type="primary">metK</name>
    <name type="ordered locus">Vapar_1126</name>
</gene>
<organism>
    <name type="scientific">Variovorax paradoxus (strain S110)</name>
    <dbReference type="NCBI Taxonomy" id="543728"/>
    <lineage>
        <taxon>Bacteria</taxon>
        <taxon>Pseudomonadati</taxon>
        <taxon>Pseudomonadota</taxon>
        <taxon>Betaproteobacteria</taxon>
        <taxon>Burkholderiales</taxon>
        <taxon>Comamonadaceae</taxon>
        <taxon>Variovorax</taxon>
    </lineage>
</organism>
<name>METK_VARPS</name>
<comment type="function">
    <text evidence="1">Catalyzes the formation of S-adenosylmethionine (AdoMet) from methionine and ATP. The overall synthetic reaction is composed of two sequential steps, AdoMet formation and the subsequent tripolyphosphate hydrolysis which occurs prior to release of AdoMet from the enzyme.</text>
</comment>
<comment type="catalytic activity">
    <reaction evidence="1">
        <text>L-methionine + ATP + H2O = S-adenosyl-L-methionine + phosphate + diphosphate</text>
        <dbReference type="Rhea" id="RHEA:21080"/>
        <dbReference type="ChEBI" id="CHEBI:15377"/>
        <dbReference type="ChEBI" id="CHEBI:30616"/>
        <dbReference type="ChEBI" id="CHEBI:33019"/>
        <dbReference type="ChEBI" id="CHEBI:43474"/>
        <dbReference type="ChEBI" id="CHEBI:57844"/>
        <dbReference type="ChEBI" id="CHEBI:59789"/>
        <dbReference type="EC" id="2.5.1.6"/>
    </reaction>
</comment>
<comment type="cofactor">
    <cofactor evidence="1">
        <name>Mg(2+)</name>
        <dbReference type="ChEBI" id="CHEBI:18420"/>
    </cofactor>
    <text evidence="1">Binds 2 divalent ions per subunit.</text>
</comment>
<comment type="cofactor">
    <cofactor evidence="1">
        <name>K(+)</name>
        <dbReference type="ChEBI" id="CHEBI:29103"/>
    </cofactor>
    <text evidence="1">Binds 1 potassium ion per subunit.</text>
</comment>
<comment type="pathway">
    <text evidence="1">Amino-acid biosynthesis; S-adenosyl-L-methionine biosynthesis; S-adenosyl-L-methionine from L-methionine: step 1/1.</text>
</comment>
<comment type="subunit">
    <text evidence="1">Homotetramer; dimer of dimers.</text>
</comment>
<comment type="subcellular location">
    <subcellularLocation>
        <location evidence="1">Cytoplasm</location>
    </subcellularLocation>
</comment>
<comment type="similarity">
    <text evidence="1">Belongs to the AdoMet synthase family.</text>
</comment>